<reference key="1">
    <citation type="journal article" date="1985" name="J. Mol. Biol.">
        <title>Nucleotide sequence of the genes involved in phosphate transport and regulation of the phosphate regulon in Escherichia coli.</title>
        <authorList>
            <person name="Amemura M."/>
            <person name="Makino K."/>
            <person name="Shinagawa H."/>
            <person name="Kobayashi A."/>
            <person name="Nakata A."/>
        </authorList>
    </citation>
    <scope>NUCLEOTIDE SEQUENCE [GENOMIC DNA]</scope>
</reference>
<reference key="2">
    <citation type="journal article" date="1985" name="J. Bacteriol.">
        <title>Phosphate-specific transport system of Escherichia coli: nucleotide sequence and gene-polypeptide relationships.</title>
        <authorList>
            <person name="Surin B.P."/>
            <person name="Rosenberg H."/>
            <person name="Cox G.B."/>
        </authorList>
    </citation>
    <scope>NUCLEOTIDE SEQUENCE [GENOMIC DNA]</scope>
</reference>
<reference key="3">
    <citation type="journal article" date="1993" name="Genomics">
        <title>DNA sequence and analysis of 136 kilobases of the Escherichia coli genome: organizational symmetry around the origin of replication.</title>
        <authorList>
            <person name="Burland V.D."/>
            <person name="Plunkett G. III"/>
            <person name="Daniels D.L."/>
            <person name="Blattner F.R."/>
        </authorList>
    </citation>
    <scope>NUCLEOTIDE SEQUENCE [LARGE SCALE GENOMIC DNA]</scope>
    <source>
        <strain>K12 / MG1655 / ATCC 47076</strain>
    </source>
</reference>
<reference key="4">
    <citation type="journal article" date="1997" name="Science">
        <title>The complete genome sequence of Escherichia coli K-12.</title>
        <authorList>
            <person name="Blattner F.R."/>
            <person name="Plunkett G. III"/>
            <person name="Bloch C.A."/>
            <person name="Perna N.T."/>
            <person name="Burland V."/>
            <person name="Riley M."/>
            <person name="Collado-Vides J."/>
            <person name="Glasner J.D."/>
            <person name="Rode C.K."/>
            <person name="Mayhew G.F."/>
            <person name="Gregor J."/>
            <person name="Davis N.W."/>
            <person name="Kirkpatrick H.A."/>
            <person name="Goeden M.A."/>
            <person name="Rose D.J."/>
            <person name="Mau B."/>
            <person name="Shao Y."/>
        </authorList>
    </citation>
    <scope>NUCLEOTIDE SEQUENCE [LARGE SCALE GENOMIC DNA]</scope>
    <source>
        <strain>K12 / MG1655 / ATCC 47076</strain>
    </source>
</reference>
<reference key="5">
    <citation type="journal article" date="2006" name="Mol. Syst. Biol.">
        <title>Highly accurate genome sequences of Escherichia coli K-12 strains MG1655 and W3110.</title>
        <authorList>
            <person name="Hayashi K."/>
            <person name="Morooka N."/>
            <person name="Yamamoto Y."/>
            <person name="Fujita K."/>
            <person name="Isono K."/>
            <person name="Choi S."/>
            <person name="Ohtsubo E."/>
            <person name="Baba T."/>
            <person name="Wanner B.L."/>
            <person name="Mori H."/>
            <person name="Horiuchi T."/>
        </authorList>
    </citation>
    <scope>NUCLEOTIDE SEQUENCE [LARGE SCALE GENOMIC DNA]</scope>
    <source>
        <strain>K12 / W3110 / ATCC 27325 / DSM 5911</strain>
    </source>
</reference>
<reference key="6">
    <citation type="journal article" date="1987" name="J. Bacteriol.">
        <title>Beta-glucoside (bgl) operon of Escherichia coli K-12: nucleotide sequence, genetic organization, and possible evolutionary relationship to regulatory components of two Bacillus subtilis genes.</title>
        <authorList>
            <person name="Schnetz K."/>
            <person name="Toloczyki C."/>
            <person name="Rak B."/>
        </authorList>
    </citation>
    <scope>NUCLEOTIDE SEQUENCE [GENOMIC DNA] OF 145-241</scope>
    <source>
        <strain>K12</strain>
    </source>
</reference>
<reference key="7">
    <citation type="journal article" date="1986" name="J. Bacteriol.">
        <title>Purification of the phoU protein, a negative regulator of the pho regulon of Escherichia coli K-12.</title>
        <authorList>
            <person name="Surin B.P."/>
            <person name="Dixon N.E."/>
            <person name="Rosenberg H."/>
        </authorList>
    </citation>
    <scope>PROTEIN SEQUENCE OF 1-22</scope>
    <scope>SUBCELLULAR LOCATION</scope>
</reference>
<reference key="8">
    <citation type="journal article" date="1983" name="J. Mol. Biol.">
        <title>Regulation of the pho regulon in Escherichia coli K-12. Genetic and physiological regulation of the positive regulatory gene phoB.</title>
        <authorList>
            <person name="Shinagawa H."/>
            <person name="Makino K."/>
            <person name="Nakata A."/>
        </authorList>
    </citation>
    <scope>FUNCTION AS REPRESSOR OF PHO REGULON</scope>
</reference>
<reference key="9">
    <citation type="journal article" date="1984" name="J. Bacteriol.">
        <title>Regulation of the phosphate regulon in Escherichia coli K-12: regulation of the negative regulatory gene phoU and identification of the gene product.</title>
        <authorList>
            <person name="Nakata A."/>
            <person name="Amemura M."/>
            <person name="Shinagawa H."/>
        </authorList>
    </citation>
    <scope>SUGGESTION OF FUNCTION AS A REPRESSOR OF PHOB</scope>
    <scope>INDUCTION</scope>
</reference>
<reference key="10">
    <citation type="journal article" date="1992" name="J. Bacteriol.">
        <title>Role of PhoU in phosphate transport and alkaline phosphatase regulation.</title>
        <authorList>
            <person name="Muda M."/>
            <person name="Rao N.N."/>
            <person name="Torriani A."/>
        </authorList>
    </citation>
    <scope>DISRUPTION PHENOTYPE</scope>
    <source>
        <strain>K12 / K10</strain>
    </source>
</reference>
<reference key="11">
    <citation type="journal article" date="1993" name="J. Bacteriol.">
        <title>Use of the rep technique for allele replacement to construct mutants with deletions of the pstSCAB-phoU operon: evidence of a new role for the PhoU protein in the phosphate regulon.</title>
        <authorList>
            <person name="Steed P.M."/>
            <person name="Wanner B.L."/>
        </authorList>
    </citation>
    <scope>DISRUPTION PHENOTYPE</scope>
    <source>
        <strain>K12</strain>
    </source>
</reference>
<reference key="12">
    <citation type="journal article" date="2002" name="Appl. Environ. Microbiol.">
        <title>Accumulation of inorganic polyphosphate in phoU mutants of Escherichia coli and Synechocystis sp. strain PCC6803.</title>
        <authorList>
            <person name="Morohoshi T."/>
            <person name="Maruo T."/>
            <person name="Shirai Y."/>
            <person name="Kato J."/>
            <person name="Ikeda T."/>
            <person name="Takiguchi N."/>
            <person name="Ohtake H."/>
            <person name="Kuroda A."/>
        </authorList>
    </citation>
    <scope>DISRUPTION PHENOTYPE</scope>
    <source>
        <strain>K12 / MG1655 / ATCC 47076</strain>
    </source>
</reference>
<reference key="13">
    <citation type="journal article" date="2002" name="Mol. Genet. Genomics">
        <title>Transcriptional analysis of the pst operon of Escherichia coli.</title>
        <authorList>
            <person name="Aguena M."/>
            <person name="Yagil E."/>
            <person name="Spira B."/>
        </authorList>
    </citation>
    <scope>TRANSCRIPT ANALYSIS</scope>
    <scope>OPERON STRUCTURE</scope>
    <source>
        <strain>K12 / MG1655 / ATCC 47076</strain>
    </source>
</reference>
<reference key="14">
    <citation type="journal article" date="2007" name="Antimicrob. Agents Chemother.">
        <title>PhoU is a persistence switch involved in persister formation and tolerance to multiple antibiotics and stresses in Escherichia coli.</title>
        <authorList>
            <person name="Li Y."/>
            <person name="Zhang Y."/>
        </authorList>
    </citation>
    <scope>FUNCTION IN TOLERANCE TO ANTIBIOTICS AND VARIOUS STRESSES</scope>
    <scope>DISRUPTION PHENOTYPE</scope>
    <scope>POTENTIAL DRUG TARGET</scope>
    <source>
        <strain>K12 / W3110 / ATCC 27325 / DSM 5911</strain>
    </source>
</reference>
<reference key="15">
    <citation type="journal article" date="2007" name="FEMS Microbiol. Lett.">
        <title>Transcript and protein level analyses of the interactions among PhoB, PhoR, PhoU and CreC in response to phosphate starvation in Escherichia coli.</title>
        <authorList>
            <person name="Baek J.H."/>
            <person name="Kang Y.J."/>
            <person name="Lee S.Y."/>
        </authorList>
    </citation>
    <scope>INDUCTION</scope>
</reference>
<reference key="16">
    <citation type="journal article" date="2008" name="FEMS Microbiol. Rev.">
        <title>The phosphate regulon and bacterial virulence: a regulatory network connecting phosphate homeostasis and pathogenesis.</title>
        <authorList>
            <person name="Lamarche M.G."/>
            <person name="Wanner B.L."/>
            <person name="Crepin S."/>
            <person name="Harel J."/>
        </authorList>
    </citation>
    <scope>REVIEW</scope>
</reference>
<reference key="17">
    <citation type="journal article" date="2009" name="Appl. Environ. Microbiol.">
        <title>Employment of a promoter-swapping technique shows that PhoU modulates the activity of the PstSCAB2 ABC transporter in Escherichia coli.</title>
        <authorList>
            <person name="Rice C.D."/>
            <person name="Pollard J.E."/>
            <person name="Lewis Z.T."/>
            <person name="McCleary W.R."/>
        </authorList>
    </citation>
    <scope>DISRUPTION PHENOTYPE</scope>
    <scope>EFFECT OF MUTATIONS ON REPRESSION OF AP ACTIVITY</scope>
</reference>
<reference key="18">
    <citation type="journal article" date="2010" name="Curr. Opin. Microbiol.">
        <title>Global regulation by the seven-component Pi signaling system.</title>
        <authorList>
            <person name="Hsieh Y.J."/>
            <person name="Wanner B.L."/>
        </authorList>
    </citation>
    <scope>REVIEW</scope>
</reference>
<protein>
    <recommendedName>
        <fullName>Phosphate-specific transport system accessory protein PhoU</fullName>
        <shortName>Pst system accessory protein PhoU</shortName>
    </recommendedName>
    <alternativeName>
        <fullName>Negative regulator of Pho regulon</fullName>
    </alternativeName>
</protein>
<sequence>MDSLNLNKHISGQFNAELESIRTQVMTMGGMVEQQLSDAITAMHNQDSDLAKRVIEGDKNVNMMEVAIDEACVRIIAKRQPTASDLRLVMVISKTIAELERIGDVADKICRTALEKFSQQHQPLLVSLESLGRHTIQMLHDVLDAFARMDIDEAVRIYREDKKVDQEYEGIVRQLMTYMMEDSRTIPSVLTALFCARSIERIGDRCQNICEFIFYYVKGQDFRHVGGDELDKLLAGKDSDK</sequence>
<keyword id="KW-0963">Cytoplasm</keyword>
<keyword id="KW-0903">Direct protein sequencing</keyword>
<keyword id="KW-0582">Pharmaceutical</keyword>
<keyword id="KW-0592">Phosphate transport</keyword>
<keyword id="KW-1185">Reference proteome</keyword>
<keyword id="KW-0813">Transport</keyword>
<dbReference type="EMBL" id="X02723">
    <property type="protein sequence ID" value="CAA26510.1"/>
    <property type="molecule type" value="Genomic_DNA"/>
</dbReference>
<dbReference type="EMBL" id="K01992">
    <property type="protein sequence ID" value="AAA24382.1"/>
    <property type="molecule type" value="Genomic_DNA"/>
</dbReference>
<dbReference type="EMBL" id="L10328">
    <property type="protein sequence ID" value="AAA62075.1"/>
    <property type="molecule type" value="Genomic_DNA"/>
</dbReference>
<dbReference type="EMBL" id="U00096">
    <property type="protein sequence ID" value="AAC76747.1"/>
    <property type="molecule type" value="Genomic_DNA"/>
</dbReference>
<dbReference type="EMBL" id="AP009048">
    <property type="protein sequence ID" value="BAE77564.1"/>
    <property type="molecule type" value="Genomic_DNA"/>
</dbReference>
<dbReference type="EMBL" id="M16487">
    <property type="protein sequence ID" value="AAA23507.1"/>
    <property type="molecule type" value="Genomic_DNA"/>
</dbReference>
<dbReference type="PIR" id="D23311">
    <property type="entry name" value="BVECPU"/>
</dbReference>
<dbReference type="RefSeq" id="NP_418180.1">
    <property type="nucleotide sequence ID" value="NC_000913.3"/>
</dbReference>
<dbReference type="RefSeq" id="WP_000377786.1">
    <property type="nucleotide sequence ID" value="NZ_STEB01000015.1"/>
</dbReference>
<dbReference type="SMR" id="P0A9K7"/>
<dbReference type="BioGRID" id="4262141">
    <property type="interactions" value="52"/>
</dbReference>
<dbReference type="DIP" id="DIP-10503N"/>
<dbReference type="FunCoup" id="P0A9K7">
    <property type="interactions" value="524"/>
</dbReference>
<dbReference type="IntAct" id="P0A9K7">
    <property type="interactions" value="1"/>
</dbReference>
<dbReference type="STRING" id="511145.b3724"/>
<dbReference type="jPOST" id="P0A9K7"/>
<dbReference type="PaxDb" id="511145-b3724"/>
<dbReference type="EnsemblBacteria" id="AAC76747">
    <property type="protein sequence ID" value="AAC76747"/>
    <property type="gene ID" value="b3724"/>
</dbReference>
<dbReference type="GeneID" id="93778211"/>
<dbReference type="GeneID" id="948233"/>
<dbReference type="KEGG" id="ecj:JW3702"/>
<dbReference type="KEGG" id="eco:b3724"/>
<dbReference type="KEGG" id="ecoc:C3026_20185"/>
<dbReference type="PATRIC" id="fig|1411691.4.peg.2976"/>
<dbReference type="EchoBASE" id="EB0728"/>
<dbReference type="eggNOG" id="COG0704">
    <property type="taxonomic scope" value="Bacteria"/>
</dbReference>
<dbReference type="HOGENOM" id="CLU_078518_2_1_6"/>
<dbReference type="InParanoid" id="P0A9K7"/>
<dbReference type="OMA" id="WKHGIET"/>
<dbReference type="OrthoDB" id="9814256at2"/>
<dbReference type="PhylomeDB" id="P0A9K7"/>
<dbReference type="BioCyc" id="EcoCyc:EG10735-MONOMER"/>
<dbReference type="PRO" id="PR:P0A9K7"/>
<dbReference type="Proteomes" id="UP000000625">
    <property type="component" value="Chromosome"/>
</dbReference>
<dbReference type="GO" id="GO:0005737">
    <property type="term" value="C:cytoplasm"/>
    <property type="evidence" value="ECO:0000314"/>
    <property type="project" value="UniProtKB"/>
</dbReference>
<dbReference type="GO" id="GO:0000287">
    <property type="term" value="F:magnesium ion binding"/>
    <property type="evidence" value="ECO:0000314"/>
    <property type="project" value="EcoCyc"/>
</dbReference>
<dbReference type="GO" id="GO:0030145">
    <property type="term" value="F:manganese ion binding"/>
    <property type="evidence" value="ECO:0000314"/>
    <property type="project" value="EcoCyc"/>
</dbReference>
<dbReference type="GO" id="GO:0042803">
    <property type="term" value="F:protein homodimerization activity"/>
    <property type="evidence" value="ECO:0000314"/>
    <property type="project" value="EcoCyc"/>
</dbReference>
<dbReference type="GO" id="GO:0071236">
    <property type="term" value="P:cellular response to antibiotic"/>
    <property type="evidence" value="ECO:0000315"/>
    <property type="project" value="UniProtKB"/>
</dbReference>
<dbReference type="GO" id="GO:0034605">
    <property type="term" value="P:cellular response to heat"/>
    <property type="evidence" value="ECO:0000315"/>
    <property type="project" value="UniProtKB"/>
</dbReference>
<dbReference type="GO" id="GO:0071467">
    <property type="term" value="P:cellular response to pH"/>
    <property type="evidence" value="ECO:0000315"/>
    <property type="project" value="UniProtKB"/>
</dbReference>
<dbReference type="GO" id="GO:0016036">
    <property type="term" value="P:cellular response to phosphate starvation"/>
    <property type="evidence" value="ECO:0000270"/>
    <property type="project" value="UniProtKB"/>
</dbReference>
<dbReference type="GO" id="GO:0009267">
    <property type="term" value="P:cellular response to starvation"/>
    <property type="evidence" value="ECO:0000315"/>
    <property type="project" value="UniProtKB"/>
</dbReference>
<dbReference type="GO" id="GO:0030643">
    <property type="term" value="P:intracellular phosphate ion homeostasis"/>
    <property type="evidence" value="ECO:0000304"/>
    <property type="project" value="UniProtKB"/>
</dbReference>
<dbReference type="GO" id="GO:0010629">
    <property type="term" value="P:negative regulation of gene expression"/>
    <property type="evidence" value="ECO:0000315"/>
    <property type="project" value="UniProtKB"/>
</dbReference>
<dbReference type="GO" id="GO:0045936">
    <property type="term" value="P:negative regulation of phosphate metabolic process"/>
    <property type="evidence" value="ECO:0000315"/>
    <property type="project" value="UniProtKB"/>
</dbReference>
<dbReference type="GO" id="GO:2000186">
    <property type="term" value="P:negative regulation of phosphate transmembrane transport"/>
    <property type="evidence" value="ECO:0000315"/>
    <property type="project" value="UniProtKB"/>
</dbReference>
<dbReference type="GO" id="GO:0006817">
    <property type="term" value="P:phosphate ion transport"/>
    <property type="evidence" value="ECO:0007669"/>
    <property type="project" value="UniProtKB-KW"/>
</dbReference>
<dbReference type="GO" id="GO:0001558">
    <property type="term" value="P:regulation of cell growth"/>
    <property type="evidence" value="ECO:0000315"/>
    <property type="project" value="UniProtKB"/>
</dbReference>
<dbReference type="FunFam" id="1.20.58.220:FF:000001">
    <property type="entry name" value="Phosphate-specific transport system accessory protein PhoU"/>
    <property type="match status" value="1"/>
</dbReference>
<dbReference type="FunFam" id="1.20.58.220:FF:000002">
    <property type="entry name" value="Phosphate-specific transport system accessory protein PhoU"/>
    <property type="match status" value="1"/>
</dbReference>
<dbReference type="Gene3D" id="1.20.58.220">
    <property type="entry name" value="Phosphate transport system protein phou homolog 2, domain 2"/>
    <property type="match status" value="2"/>
</dbReference>
<dbReference type="InterPro" id="IPR028366">
    <property type="entry name" value="P_transport_PhoU"/>
</dbReference>
<dbReference type="InterPro" id="IPR038078">
    <property type="entry name" value="PhoU-like_sf"/>
</dbReference>
<dbReference type="InterPro" id="IPR026022">
    <property type="entry name" value="PhoU_dom"/>
</dbReference>
<dbReference type="NCBIfam" id="TIGR02135">
    <property type="entry name" value="phoU_full"/>
    <property type="match status" value="1"/>
</dbReference>
<dbReference type="NCBIfam" id="NF008332">
    <property type="entry name" value="PRK11115.1"/>
    <property type="match status" value="1"/>
</dbReference>
<dbReference type="PANTHER" id="PTHR42930">
    <property type="entry name" value="PHOSPHATE-SPECIFIC TRANSPORT SYSTEM ACCESSORY PROTEIN PHOU"/>
    <property type="match status" value="1"/>
</dbReference>
<dbReference type="PANTHER" id="PTHR42930:SF3">
    <property type="entry name" value="PHOSPHATE-SPECIFIC TRANSPORT SYSTEM ACCESSORY PROTEIN PHOU"/>
    <property type="match status" value="1"/>
</dbReference>
<dbReference type="Pfam" id="PF01895">
    <property type="entry name" value="PhoU"/>
    <property type="match status" value="2"/>
</dbReference>
<dbReference type="PIRSF" id="PIRSF003107">
    <property type="entry name" value="PhoU"/>
    <property type="match status" value="1"/>
</dbReference>
<dbReference type="SUPFAM" id="SSF109755">
    <property type="entry name" value="PhoU-like"/>
    <property type="match status" value="1"/>
</dbReference>
<name>PHOU_ECOLI</name>
<organism>
    <name type="scientific">Escherichia coli (strain K12)</name>
    <dbReference type="NCBI Taxonomy" id="83333"/>
    <lineage>
        <taxon>Bacteria</taxon>
        <taxon>Pseudomonadati</taxon>
        <taxon>Pseudomonadota</taxon>
        <taxon>Gammaproteobacteria</taxon>
        <taxon>Enterobacterales</taxon>
        <taxon>Enterobacteriaceae</taxon>
        <taxon>Escherichia</taxon>
    </lineage>
</organism>
<feature type="chain" id="PRO_0000155168" description="Phosphate-specific transport system accessory protein PhoU">
    <location>
        <begin position="1"/>
        <end position="241"/>
    </location>
</feature>
<proteinExistence type="evidence at protein level"/>
<accession>P0A9K7</accession>
<accession>P07656</accession>
<accession>Q2M842</accession>
<evidence type="ECO:0000250" key="1"/>
<evidence type="ECO:0000269" key="2">
    <source>
    </source>
</evidence>
<evidence type="ECO:0000269" key="3">
    <source>
    </source>
</evidence>
<evidence type="ECO:0000269" key="4">
    <source>
    </source>
</evidence>
<evidence type="ECO:0000269" key="5">
    <source>
    </source>
</evidence>
<evidence type="ECO:0000269" key="6">
    <source>
    </source>
</evidence>
<evidence type="ECO:0000269" key="7">
    <source>
    </source>
</evidence>
<evidence type="ECO:0000269" key="8">
    <source>
    </source>
</evidence>
<evidence type="ECO:0000269" key="9">
    <source>
    </source>
</evidence>
<evidence type="ECO:0000269" key="10">
    <source>
    </source>
</evidence>
<evidence type="ECO:0000305" key="11"/>
<evidence type="ECO:0000305" key="12">
    <source>
    </source>
</evidence>
<gene>
    <name type="primary">phoU</name>
    <name type="synonym">nmpA</name>
    <name type="ordered locus">b3724</name>
    <name type="ordered locus">JW3702</name>
</gene>
<comment type="function">
    <text evidence="4 9">Part of the phosphate (Pho) regulon, which plays a key role in phosphate homeostasis. Encoded together with proteins of the phosphate-specific transport (Pst) system in the polycistronic pstSCAB-phoU operon. PhoU is essential for the repression of the Pho regulon at high phosphate conditions. In this role, it may bind, possibly as a chaperone, to PhoR, PhoB or a PhoR-PhoB complex to promote dephosphorylation of phospho-PhoB, or inhibit formation of the PhoR-PhoB transitory complex. Is also part of complex networks important for bacterial virulence, tolerance to antibiotics and stress response.</text>
</comment>
<comment type="subunit">
    <text evidence="1">Homodimer.</text>
</comment>
<comment type="subcellular location">
    <subcellularLocation>
        <location evidence="7">Cytoplasm</location>
    </subcellularLocation>
</comment>
<comment type="induction">
    <text evidence="5 8">Expressed at higher levels under excess phosphate culture conditions (PubMed:6090402). Induced by phosphate starvation via the PhoR/PhoB two-component regulatory system (PubMed:18031348).</text>
</comment>
<comment type="disruption phenotype">
    <text evidence="2 3 4 6 10">Produces high level of alkaline phosphatase (AP) when grown with excess phosphate (PubMed:1459954). No effect on phosphate uptake, but particular deletion mutants have a severe growth defect, which is largely alleviated by a compensatory mutation in the pstSCAB genes or in the phoRB operon (PubMed:8226621). Accumulates high levels of polyP, approximately 400 nmol of phosphate residues/mg of protein (PubMed:12147514). Higher susceptibility to a diverse range of antibiotics including ampicillin, norfloxacin and gentamicin, and stresses such as starvation, acid pH, heat, peroxide, weak acids and energy inhibitors, especially in stationary phase (PubMed:17420206). Metabolically hyperactive status of the cell showing increased expression of energy production genes, flagella and chemotaxis genes, and a defect in persister formation (PubMed:17420206). Cells transport phosphate via PstSCAB transporter system at approximately 20% higher rate and accumulate higher levels of the transporter and about 50% more phosphate in 12 minutes than wild-type cells in phosphate-replete medium (PubMed:19047379).</text>
</comment>
<comment type="pharmaceutical">
    <text>May be a drug target for designing new drugs that kill persister bacteria for more effective control of bacterial infections.</text>
</comment>
<comment type="similarity">
    <text evidence="11">Belongs to the PhoU family.</text>
</comment>
<comment type="caution">
    <text evidence="12">Was originally thought to be involved in phosphate transport.</text>
</comment>